<evidence type="ECO:0000255" key="1">
    <source>
        <dbReference type="HAMAP-Rule" id="MF_00391"/>
    </source>
</evidence>
<evidence type="ECO:0000305" key="2"/>
<feature type="chain" id="PRO_1000013485" description="Large ribosomal subunit protein bL34">
    <location>
        <begin position="1"/>
        <end position="44"/>
    </location>
</feature>
<organism>
    <name type="scientific">Hydrogenovibrio crunogenus (strain DSM 25203 / XCL-2)</name>
    <name type="common">Thiomicrospira crunogena</name>
    <dbReference type="NCBI Taxonomy" id="317025"/>
    <lineage>
        <taxon>Bacteria</taxon>
        <taxon>Pseudomonadati</taxon>
        <taxon>Pseudomonadota</taxon>
        <taxon>Gammaproteobacteria</taxon>
        <taxon>Thiotrichales</taxon>
        <taxon>Piscirickettsiaceae</taxon>
        <taxon>Hydrogenovibrio</taxon>
    </lineage>
</organism>
<comment type="similarity">
    <text evidence="1">Belongs to the bacterial ribosomal protein bL34 family.</text>
</comment>
<reference key="1">
    <citation type="journal article" date="2006" name="PLoS Biol.">
        <title>The genome of deep-sea vent chemolithoautotroph Thiomicrospira crunogena XCL-2.</title>
        <authorList>
            <person name="Scott K.M."/>
            <person name="Sievert S.M."/>
            <person name="Abril F.N."/>
            <person name="Ball L.A."/>
            <person name="Barrett C.J."/>
            <person name="Blake R.A."/>
            <person name="Boller A.J."/>
            <person name="Chain P.S.G."/>
            <person name="Clark J.A."/>
            <person name="Davis C.R."/>
            <person name="Detter C."/>
            <person name="Do K.F."/>
            <person name="Dobrinski K.P."/>
            <person name="Faza B.I."/>
            <person name="Fitzpatrick K.A."/>
            <person name="Freyermuth S.K."/>
            <person name="Harmer T.L."/>
            <person name="Hauser L.J."/>
            <person name="Huegler M."/>
            <person name="Kerfeld C.A."/>
            <person name="Klotz M.G."/>
            <person name="Kong W.W."/>
            <person name="Land M."/>
            <person name="Lapidus A."/>
            <person name="Larimer F.W."/>
            <person name="Longo D.L."/>
            <person name="Lucas S."/>
            <person name="Malfatti S.A."/>
            <person name="Massey S.E."/>
            <person name="Martin D.D."/>
            <person name="McCuddin Z."/>
            <person name="Meyer F."/>
            <person name="Moore J.L."/>
            <person name="Ocampo L.H. Jr."/>
            <person name="Paul J.H."/>
            <person name="Paulsen I.T."/>
            <person name="Reep D.K."/>
            <person name="Ren Q."/>
            <person name="Ross R.L."/>
            <person name="Sato P.Y."/>
            <person name="Thomas P."/>
            <person name="Tinkham L.E."/>
            <person name="Zeruth G.T."/>
        </authorList>
    </citation>
    <scope>NUCLEOTIDE SEQUENCE [LARGE SCALE GENOMIC DNA]</scope>
    <source>
        <strain>DSM 25203 / XCL-2</strain>
    </source>
</reference>
<accession>Q31DI6</accession>
<proteinExistence type="inferred from homology"/>
<gene>
    <name evidence="1" type="primary">rpmH</name>
    <name type="ordered locus">Tcr_2199</name>
</gene>
<sequence length="44" mass="5078">MKRTFQPSVIKRARTHGFRARMATKNGRKVLAARRAKGRKRLAV</sequence>
<keyword id="KW-0687">Ribonucleoprotein</keyword>
<keyword id="KW-0689">Ribosomal protein</keyword>
<protein>
    <recommendedName>
        <fullName evidence="1">Large ribosomal subunit protein bL34</fullName>
    </recommendedName>
    <alternativeName>
        <fullName evidence="2">50S ribosomal protein L34</fullName>
    </alternativeName>
</protein>
<name>RL34_HYDCU</name>
<dbReference type="EMBL" id="CP000109">
    <property type="protein sequence ID" value="ABB42787.1"/>
    <property type="molecule type" value="Genomic_DNA"/>
</dbReference>
<dbReference type="SMR" id="Q31DI6"/>
<dbReference type="STRING" id="317025.Tcr_2199"/>
<dbReference type="KEGG" id="tcx:Tcr_2199"/>
<dbReference type="eggNOG" id="COG0230">
    <property type="taxonomic scope" value="Bacteria"/>
</dbReference>
<dbReference type="HOGENOM" id="CLU_129938_2_0_6"/>
<dbReference type="GO" id="GO:1990904">
    <property type="term" value="C:ribonucleoprotein complex"/>
    <property type="evidence" value="ECO:0007669"/>
    <property type="project" value="UniProtKB-KW"/>
</dbReference>
<dbReference type="GO" id="GO:0005840">
    <property type="term" value="C:ribosome"/>
    <property type="evidence" value="ECO:0007669"/>
    <property type="project" value="UniProtKB-KW"/>
</dbReference>
<dbReference type="GO" id="GO:0003735">
    <property type="term" value="F:structural constituent of ribosome"/>
    <property type="evidence" value="ECO:0007669"/>
    <property type="project" value="InterPro"/>
</dbReference>
<dbReference type="GO" id="GO:0006412">
    <property type="term" value="P:translation"/>
    <property type="evidence" value="ECO:0007669"/>
    <property type="project" value="UniProtKB-UniRule"/>
</dbReference>
<dbReference type="FunFam" id="1.10.287.3980:FF:000001">
    <property type="entry name" value="Mitochondrial ribosomal protein L34"/>
    <property type="match status" value="1"/>
</dbReference>
<dbReference type="Gene3D" id="1.10.287.3980">
    <property type="match status" value="1"/>
</dbReference>
<dbReference type="HAMAP" id="MF_00391">
    <property type="entry name" value="Ribosomal_bL34"/>
    <property type="match status" value="1"/>
</dbReference>
<dbReference type="InterPro" id="IPR000271">
    <property type="entry name" value="Ribosomal_bL34"/>
</dbReference>
<dbReference type="InterPro" id="IPR020939">
    <property type="entry name" value="Ribosomal_bL34_CS"/>
</dbReference>
<dbReference type="NCBIfam" id="TIGR01030">
    <property type="entry name" value="rpmH_bact"/>
    <property type="match status" value="1"/>
</dbReference>
<dbReference type="PANTHER" id="PTHR14503:SF4">
    <property type="entry name" value="LARGE RIBOSOMAL SUBUNIT PROTEIN BL34M"/>
    <property type="match status" value="1"/>
</dbReference>
<dbReference type="PANTHER" id="PTHR14503">
    <property type="entry name" value="MITOCHONDRIAL RIBOSOMAL PROTEIN 34 FAMILY MEMBER"/>
    <property type="match status" value="1"/>
</dbReference>
<dbReference type="Pfam" id="PF00468">
    <property type="entry name" value="Ribosomal_L34"/>
    <property type="match status" value="1"/>
</dbReference>
<dbReference type="PROSITE" id="PS00784">
    <property type="entry name" value="RIBOSOMAL_L34"/>
    <property type="match status" value="1"/>
</dbReference>